<keyword id="KW-0328">Glycosyltransferase</keyword>
<keyword id="KW-1185">Reference proteome</keyword>
<keyword id="KW-0808">Transferase</keyword>
<protein>
    <recommendedName>
        <fullName evidence="1">AMP phosphorylase</fullName>
        <shortName evidence="1">AMPpase</shortName>
        <ecNumber evidence="1">2.4.2.57</ecNumber>
    </recommendedName>
    <alternativeName>
        <fullName evidence="1">Nucleoside monophosphate phosphorylase</fullName>
        <shortName evidence="1">NMP phosphorylase</shortName>
    </alternativeName>
</protein>
<gene>
    <name type="ordered locus">Mlab_0067</name>
</gene>
<reference key="1">
    <citation type="journal article" date="2009" name="Stand. Genomic Sci.">
        <title>Complete genome sequence of Methanocorpusculum labreanum type strain Z.</title>
        <authorList>
            <person name="Anderson I.J."/>
            <person name="Sieprawska-Lupa M."/>
            <person name="Goltsman E."/>
            <person name="Lapidus A."/>
            <person name="Copeland A."/>
            <person name="Glavina Del Rio T."/>
            <person name="Tice H."/>
            <person name="Dalin E."/>
            <person name="Barry K."/>
            <person name="Pitluck S."/>
            <person name="Hauser L."/>
            <person name="Land M."/>
            <person name="Lucas S."/>
            <person name="Richardson P."/>
            <person name="Whitman W.B."/>
            <person name="Kyrpides N.C."/>
        </authorList>
    </citation>
    <scope>NUCLEOTIDE SEQUENCE [LARGE SCALE GENOMIC DNA]</scope>
    <source>
        <strain>ATCC 43576 / DSM 4855 / Z</strain>
    </source>
</reference>
<name>AMPPA_METLZ</name>
<organism>
    <name type="scientific">Methanocorpusculum labreanum (strain ATCC 43576 / DSM 4855 / Z)</name>
    <dbReference type="NCBI Taxonomy" id="410358"/>
    <lineage>
        <taxon>Archaea</taxon>
        <taxon>Methanobacteriati</taxon>
        <taxon>Methanobacteriota</taxon>
        <taxon>Stenosarchaea group</taxon>
        <taxon>Methanomicrobia</taxon>
        <taxon>Methanomicrobiales</taxon>
        <taxon>Methanocorpusculaceae</taxon>
        <taxon>Methanocorpusculum</taxon>
    </lineage>
</organism>
<proteinExistence type="inferred from homology"/>
<evidence type="ECO:0000255" key="1">
    <source>
        <dbReference type="HAMAP-Rule" id="MF_02132"/>
    </source>
</evidence>
<feature type="chain" id="PRO_0000314726" description="AMP phosphorylase">
    <location>
        <begin position="1"/>
        <end position="505"/>
    </location>
</feature>
<feature type="active site" description="Proton donor" evidence="1">
    <location>
        <position position="257"/>
    </location>
</feature>
<feature type="binding site" evidence="1">
    <location>
        <position position="169"/>
    </location>
    <ligand>
        <name>AMP</name>
        <dbReference type="ChEBI" id="CHEBI:456215"/>
    </ligand>
</feature>
<feature type="binding site" evidence="1">
    <location>
        <begin position="195"/>
        <end position="200"/>
    </location>
    <ligand>
        <name>AMP</name>
        <dbReference type="ChEBI" id="CHEBI:456215"/>
    </ligand>
</feature>
<feature type="binding site" evidence="1">
    <location>
        <position position="204"/>
    </location>
    <ligand>
        <name>AMP</name>
        <dbReference type="ChEBI" id="CHEBI:456215"/>
    </ligand>
</feature>
<feature type="binding site" evidence="1">
    <location>
        <position position="265"/>
    </location>
    <ligand>
        <name>AMP</name>
        <dbReference type="ChEBI" id="CHEBI:456215"/>
    </ligand>
</feature>
<feature type="binding site" evidence="1">
    <location>
        <position position="289"/>
    </location>
    <ligand>
        <name>AMP</name>
        <dbReference type="ChEBI" id="CHEBI:456215"/>
    </ligand>
</feature>
<dbReference type="EC" id="2.4.2.57" evidence="1"/>
<dbReference type="EMBL" id="CP000559">
    <property type="protein sequence ID" value="ABN06245.1"/>
    <property type="molecule type" value="Genomic_DNA"/>
</dbReference>
<dbReference type="RefSeq" id="WP_011832446.1">
    <property type="nucleotide sequence ID" value="NC_008942.1"/>
</dbReference>
<dbReference type="SMR" id="A2SPI9"/>
<dbReference type="STRING" id="410358.Mlab_0067"/>
<dbReference type="GeneID" id="4795851"/>
<dbReference type="KEGG" id="mla:Mlab_0067"/>
<dbReference type="eggNOG" id="arCOG02013">
    <property type="taxonomic scope" value="Archaea"/>
</dbReference>
<dbReference type="HOGENOM" id="CLU_025040_6_0_2"/>
<dbReference type="OrthoDB" id="9827at2157"/>
<dbReference type="Proteomes" id="UP000000365">
    <property type="component" value="Chromosome"/>
</dbReference>
<dbReference type="GO" id="GO:0005829">
    <property type="term" value="C:cytosol"/>
    <property type="evidence" value="ECO:0007669"/>
    <property type="project" value="TreeGrafter"/>
</dbReference>
<dbReference type="GO" id="GO:0004645">
    <property type="term" value="F:1,4-alpha-oligoglucan phosphorylase activity"/>
    <property type="evidence" value="ECO:0007669"/>
    <property type="project" value="InterPro"/>
</dbReference>
<dbReference type="GO" id="GO:0016208">
    <property type="term" value="F:AMP binding"/>
    <property type="evidence" value="ECO:0007669"/>
    <property type="project" value="UniProtKB-UniRule"/>
</dbReference>
<dbReference type="GO" id="GO:0016763">
    <property type="term" value="F:pentosyltransferase activity"/>
    <property type="evidence" value="ECO:0007669"/>
    <property type="project" value="UniProtKB-UniRule"/>
</dbReference>
<dbReference type="GO" id="GO:0006196">
    <property type="term" value="P:AMP catabolic process"/>
    <property type="evidence" value="ECO:0007669"/>
    <property type="project" value="UniProtKB-UniRule"/>
</dbReference>
<dbReference type="GO" id="GO:0046125">
    <property type="term" value="P:pyrimidine deoxyribonucleoside metabolic process"/>
    <property type="evidence" value="ECO:0007669"/>
    <property type="project" value="InterPro"/>
</dbReference>
<dbReference type="GO" id="GO:0006206">
    <property type="term" value="P:pyrimidine nucleobase metabolic process"/>
    <property type="evidence" value="ECO:0007669"/>
    <property type="project" value="InterPro"/>
</dbReference>
<dbReference type="Gene3D" id="1.20.970.50">
    <property type="match status" value="1"/>
</dbReference>
<dbReference type="Gene3D" id="2.40.40.20">
    <property type="match status" value="1"/>
</dbReference>
<dbReference type="Gene3D" id="3.40.1030.10">
    <property type="entry name" value="Nucleoside phosphorylase/phosphoribosyltransferase catalytic domain"/>
    <property type="match status" value="1"/>
</dbReference>
<dbReference type="Gene3D" id="3.90.1170.30">
    <property type="entry name" value="Pyrimidine nucleoside phosphorylase-like, C-terminal domain"/>
    <property type="match status" value="1"/>
</dbReference>
<dbReference type="HAMAP" id="MF_02132">
    <property type="entry name" value="AMP_phosphorylase"/>
    <property type="match status" value="1"/>
</dbReference>
<dbReference type="InterPro" id="IPR017713">
    <property type="entry name" value="AMP_phosphorylase"/>
</dbReference>
<dbReference type="InterPro" id="IPR000312">
    <property type="entry name" value="Glycosyl_Trfase_fam3"/>
</dbReference>
<dbReference type="InterPro" id="IPR017459">
    <property type="entry name" value="Glycosyl_Trfase_fam3_N_dom"/>
</dbReference>
<dbReference type="InterPro" id="IPR036320">
    <property type="entry name" value="Glycosyl_Trfase_fam3_N_dom_sf"/>
</dbReference>
<dbReference type="InterPro" id="IPR035902">
    <property type="entry name" value="Nuc_phospho_transferase"/>
</dbReference>
<dbReference type="InterPro" id="IPR036566">
    <property type="entry name" value="PYNP-like_C_sf"/>
</dbReference>
<dbReference type="InterPro" id="IPR013102">
    <property type="entry name" value="PYNP_C"/>
</dbReference>
<dbReference type="InterPro" id="IPR017872">
    <property type="entry name" value="Pyrmidine_PPase_CS"/>
</dbReference>
<dbReference type="InterPro" id="IPR013466">
    <property type="entry name" value="Thymidine/AMP_Pase"/>
</dbReference>
<dbReference type="InterPro" id="IPR000053">
    <property type="entry name" value="Thymidine/pyrmidine_PPase"/>
</dbReference>
<dbReference type="NCBIfam" id="TIGR03327">
    <property type="entry name" value="AMP_phos"/>
    <property type="match status" value="1"/>
</dbReference>
<dbReference type="NCBIfam" id="TIGR02645">
    <property type="entry name" value="ARCH_P_rylase"/>
    <property type="match status" value="1"/>
</dbReference>
<dbReference type="NCBIfam" id="NF003338">
    <property type="entry name" value="PRK04350.1"/>
    <property type="match status" value="1"/>
</dbReference>
<dbReference type="PANTHER" id="PTHR10515">
    <property type="entry name" value="THYMIDINE PHOSPHORYLASE"/>
    <property type="match status" value="1"/>
</dbReference>
<dbReference type="PANTHER" id="PTHR10515:SF0">
    <property type="entry name" value="THYMIDINE PHOSPHORYLASE"/>
    <property type="match status" value="1"/>
</dbReference>
<dbReference type="Pfam" id="PF02885">
    <property type="entry name" value="Glycos_trans_3N"/>
    <property type="match status" value="1"/>
</dbReference>
<dbReference type="Pfam" id="PF00591">
    <property type="entry name" value="Glycos_transf_3"/>
    <property type="match status" value="1"/>
</dbReference>
<dbReference type="Pfam" id="PF07831">
    <property type="entry name" value="PYNP_C"/>
    <property type="match status" value="1"/>
</dbReference>
<dbReference type="PIRSF" id="PIRSF000478">
    <property type="entry name" value="TP_PyNP"/>
    <property type="match status" value="1"/>
</dbReference>
<dbReference type="SMART" id="SM00941">
    <property type="entry name" value="PYNP_C"/>
    <property type="match status" value="1"/>
</dbReference>
<dbReference type="SUPFAM" id="SSF52418">
    <property type="entry name" value="Nucleoside phosphorylase/phosphoribosyltransferase catalytic domain"/>
    <property type="match status" value="1"/>
</dbReference>
<dbReference type="SUPFAM" id="SSF47648">
    <property type="entry name" value="Nucleoside phosphorylase/phosphoribosyltransferase N-terminal domain"/>
    <property type="match status" value="1"/>
</dbReference>
<dbReference type="SUPFAM" id="SSF54680">
    <property type="entry name" value="Pyrimidine nucleoside phosphorylase C-terminal domain"/>
    <property type="match status" value="1"/>
</dbReference>
<dbReference type="PROSITE" id="PS00647">
    <property type="entry name" value="THYMID_PHOSPHORYLASE"/>
    <property type="match status" value="1"/>
</dbReference>
<comment type="function">
    <text evidence="1">Catalyzes the conversion of AMP and phosphate to adenine and ribose 1,5-bisphosphate (R15P). Exhibits phosphorylase activity toward CMP and UMP in addition to AMP. Functions in an archaeal AMP degradation pathway, together with R15P isomerase and RubisCO.</text>
</comment>
<comment type="catalytic activity">
    <reaction evidence="1">
        <text>AMP + phosphate = alpha-D-ribose 1,5-bisphosphate + adenine</text>
        <dbReference type="Rhea" id="RHEA:36975"/>
        <dbReference type="ChEBI" id="CHEBI:16708"/>
        <dbReference type="ChEBI" id="CHEBI:43474"/>
        <dbReference type="ChEBI" id="CHEBI:68688"/>
        <dbReference type="ChEBI" id="CHEBI:456215"/>
        <dbReference type="EC" id="2.4.2.57"/>
    </reaction>
</comment>
<comment type="catalytic activity">
    <reaction evidence="1">
        <text>CMP + phosphate = cytosine + alpha-D-ribose 1,5-bisphosphate</text>
        <dbReference type="Rhea" id="RHEA:36987"/>
        <dbReference type="ChEBI" id="CHEBI:16040"/>
        <dbReference type="ChEBI" id="CHEBI:43474"/>
        <dbReference type="ChEBI" id="CHEBI:60377"/>
        <dbReference type="ChEBI" id="CHEBI:68688"/>
        <dbReference type="EC" id="2.4.2.57"/>
    </reaction>
</comment>
<comment type="catalytic activity">
    <reaction evidence="1">
        <text>UMP + phosphate = alpha-D-ribose 1,5-bisphosphate + uracil</text>
        <dbReference type="Rhea" id="RHEA:36991"/>
        <dbReference type="ChEBI" id="CHEBI:17568"/>
        <dbReference type="ChEBI" id="CHEBI:43474"/>
        <dbReference type="ChEBI" id="CHEBI:57865"/>
        <dbReference type="ChEBI" id="CHEBI:68688"/>
        <dbReference type="EC" id="2.4.2.57"/>
    </reaction>
</comment>
<comment type="similarity">
    <text evidence="1">Belongs to the thymidine/pyrimidine-nucleoside phosphorylase family. Type 2 subfamily.</text>
</comment>
<accession>A2SPI9</accession>
<sequence>MNLILDMIDISTPVILLNDTDARQIGVLEGDRVTITRIKTKHTIAAPVSITKTLTSQGTATISLGTNENLAAEKGDEIEIRAAPRPASIAFIRKKMDGGKFTREETATIISDMSSNVLSPSEITAYITAAYINGLDMDEVEFLTREMVASGEQITFSKKPVVDKHSIGGVPGNKITLLVVPVIAASGLLIPKTSSRAITGAGGTADLMEALAPVAFSAAEIKTMTEKAGGVIVWGGATNIAPADDMIVTYEYPLKIDARGQMLASIMAKKMAVGSDTCVIDIPIGPGTKIPDEAEGRVLANELITLGNRLGIRVECAVTFGGSPIGRNIGVNLEVSEALSLLEGKRGANSLVQKSVAIAGIALEMTGKTGADSGAEAAYDIIKKGKALKKMLDIIEIQGGDPKVKSTDFPVGEHTFVVPAASDGYVVSVKNQALISIARAAGSPVDHGAGLHLHKKPGEYVKRGEPLLTIYAERGWRLTRAIEEARTSYPVLVEGMLLERISSNR</sequence>